<sequence length="13" mass="1470">YDPSPLQDFCVAD</sequence>
<comment type="function">
    <text>May play a role in altering the properties of cell walls during germinative growth.</text>
</comment>
<comment type="subunit">
    <text evidence="1">Oligomer (believed to be a pentamer but probably hexamer).</text>
</comment>
<comment type="subcellular location">
    <subcellularLocation>
        <location>Cytoplasm</location>
        <location>Cytosol</location>
    </subcellularLocation>
    <subcellularLocation>
        <location>Endoplasmic reticulum</location>
    </subcellularLocation>
    <subcellularLocation>
        <location>Microsome</location>
    </subcellularLocation>
    <subcellularLocation>
        <location>Secreted</location>
        <location>Extracellular space</location>
        <location>Apoplast</location>
    </subcellularLocation>
    <subcellularLocation>
        <location>Secreted</location>
        <location>Cell wall</location>
    </subcellularLocation>
    <text>Soluble, microsomal and cell wall fractions.</text>
</comment>
<comment type="tissue specificity">
    <text>Roots and coleoptile. In roots, present in the mature region, but not in the tip. Not detected in leaves.</text>
</comment>
<comment type="induction">
    <text>Increased by salt stress in roots and decreased by salt stress in coleoptile.</text>
</comment>
<comment type="PTM">
    <text>Glycosylated.</text>
</comment>
<comment type="similarity">
    <text evidence="2">Belongs to the germin family.</text>
</comment>
<name>GER1_HORVU</name>
<proteinExistence type="evidence at protein level"/>
<accession>P28525</accession>
<keyword id="KW-0052">Apoplast</keyword>
<keyword id="KW-0134">Cell wall</keyword>
<keyword id="KW-0961">Cell wall biogenesis/degradation</keyword>
<keyword id="KW-0963">Cytoplasm</keyword>
<keyword id="KW-0903">Direct protein sequencing</keyword>
<keyword id="KW-0256">Endoplasmic reticulum</keyword>
<keyword id="KW-0325">Glycoprotein</keyword>
<keyword id="KW-0492">Microsome</keyword>
<keyword id="KW-0964">Secreted</keyword>
<evidence type="ECO:0000250" key="1"/>
<evidence type="ECO:0000305" key="2"/>
<dbReference type="GO" id="GO:0048046">
    <property type="term" value="C:apoplast"/>
    <property type="evidence" value="ECO:0007669"/>
    <property type="project" value="UniProtKB-SubCell"/>
</dbReference>
<dbReference type="GO" id="GO:0005829">
    <property type="term" value="C:cytosol"/>
    <property type="evidence" value="ECO:0007669"/>
    <property type="project" value="UniProtKB-SubCell"/>
</dbReference>
<dbReference type="GO" id="GO:0005783">
    <property type="term" value="C:endoplasmic reticulum"/>
    <property type="evidence" value="ECO:0007669"/>
    <property type="project" value="UniProtKB-SubCell"/>
</dbReference>
<dbReference type="GO" id="GO:0071555">
    <property type="term" value="P:cell wall organization"/>
    <property type="evidence" value="ECO:0007669"/>
    <property type="project" value="UniProtKB-KW"/>
</dbReference>
<protein>
    <recommendedName>
        <fullName>Germin GS1</fullName>
    </recommendedName>
</protein>
<feature type="chain" id="PRO_0000192011" description="Germin GS1">
    <location>
        <begin position="1"/>
        <end position="13" status="greater than"/>
    </location>
</feature>
<feature type="unsure residue">
    <location>
        <position position="10"/>
    </location>
</feature>
<feature type="non-terminal residue">
    <location>
        <position position="13"/>
    </location>
</feature>
<reference key="1">
    <citation type="journal article" date="1991" name="Plant Physiol.">
        <title>Germin-like polypeptides increase in barley roots during salt stress.</title>
        <authorList>
            <person name="Hurkman W.J."/>
            <person name="Tao H.P."/>
            <person name="Tanaka C.K."/>
        </authorList>
    </citation>
    <scope>PROTEIN SEQUENCE</scope>
    <source>
        <strain>cv. CM 72</strain>
        <tissue>Root</tissue>
    </source>
</reference>
<organism>
    <name type="scientific">Hordeum vulgare</name>
    <name type="common">Barley</name>
    <dbReference type="NCBI Taxonomy" id="4513"/>
    <lineage>
        <taxon>Eukaryota</taxon>
        <taxon>Viridiplantae</taxon>
        <taxon>Streptophyta</taxon>
        <taxon>Embryophyta</taxon>
        <taxon>Tracheophyta</taxon>
        <taxon>Spermatophyta</taxon>
        <taxon>Magnoliopsida</taxon>
        <taxon>Liliopsida</taxon>
        <taxon>Poales</taxon>
        <taxon>Poaceae</taxon>
        <taxon>BOP clade</taxon>
        <taxon>Pooideae</taxon>
        <taxon>Triticodae</taxon>
        <taxon>Triticeae</taxon>
        <taxon>Hordeinae</taxon>
        <taxon>Hordeum</taxon>
    </lineage>
</organism>